<proteinExistence type="evidence at protein level"/>
<feature type="chain" id="PRO_0000458075" description="Trimethylamine monooxygenase">
    <location>
        <begin position="1"/>
        <end position="451"/>
    </location>
</feature>
<feature type="binding site" evidence="1">
    <location>
        <position position="12"/>
    </location>
    <ligand>
        <name>FAD</name>
        <dbReference type="ChEBI" id="CHEBI:57692"/>
    </ligand>
</feature>
<feature type="binding site" evidence="1">
    <location>
        <position position="37"/>
    </location>
    <ligand>
        <name>FAD</name>
        <dbReference type="ChEBI" id="CHEBI:57692"/>
    </ligand>
</feature>
<feature type="binding site" evidence="1">
    <location>
        <position position="39"/>
    </location>
    <ligand>
        <name>FAD</name>
        <dbReference type="ChEBI" id="CHEBI:57692"/>
    </ligand>
</feature>
<feature type="binding site" evidence="1">
    <location>
        <position position="45"/>
    </location>
    <ligand>
        <name>FAD</name>
        <dbReference type="ChEBI" id="CHEBI:57692"/>
    </ligand>
</feature>
<feature type="binding site" evidence="1">
    <location>
        <position position="46"/>
    </location>
    <ligand>
        <name>FAD</name>
        <dbReference type="ChEBI" id="CHEBI:57692"/>
    </ligand>
</feature>
<feature type="binding site" evidence="1">
    <location>
        <position position="62"/>
    </location>
    <ligand>
        <name>FAD</name>
        <dbReference type="ChEBI" id="CHEBI:57692"/>
    </ligand>
</feature>
<feature type="binding site" evidence="1">
    <location>
        <position position="70"/>
    </location>
    <ligand>
        <name>NADP(+)</name>
        <dbReference type="ChEBI" id="CHEBI:58349"/>
    </ligand>
</feature>
<feature type="binding site" evidence="1">
    <location>
        <position position="72"/>
    </location>
    <ligand>
        <name>FAD</name>
        <dbReference type="ChEBI" id="CHEBI:57692"/>
    </ligand>
</feature>
<feature type="binding site" evidence="1">
    <location>
        <position position="72"/>
    </location>
    <ligand>
        <name>NADP(+)</name>
        <dbReference type="ChEBI" id="CHEBI:58349"/>
    </ligand>
</feature>
<feature type="binding site" evidence="1">
    <location>
        <position position="125"/>
    </location>
    <ligand>
        <name>FAD</name>
        <dbReference type="ChEBI" id="CHEBI:57692"/>
    </ligand>
</feature>
<feature type="binding site" evidence="1">
    <location>
        <position position="204"/>
    </location>
    <ligand>
        <name>NADP(+)</name>
        <dbReference type="ChEBI" id="CHEBI:58349"/>
    </ligand>
</feature>
<feature type="binding site" evidence="1">
    <location>
        <position position="205"/>
    </location>
    <ligand>
        <name>NADP(+)</name>
        <dbReference type="ChEBI" id="CHEBI:58349"/>
    </ligand>
</feature>
<feature type="binding site" evidence="1">
    <location>
        <position position="207"/>
    </location>
    <ligand>
        <name>NADP(+)</name>
        <dbReference type="ChEBI" id="CHEBI:58349"/>
    </ligand>
</feature>
<feature type="binding site" evidence="1">
    <location>
        <position position="228"/>
    </location>
    <ligand>
        <name>NADP(+)</name>
        <dbReference type="ChEBI" id="CHEBI:58349"/>
    </ligand>
</feature>
<feature type="binding site" evidence="1">
    <location>
        <position position="317"/>
    </location>
    <ligand>
        <name>FAD</name>
        <dbReference type="ChEBI" id="CHEBI:57692"/>
    </ligand>
</feature>
<feature type="binding site" evidence="1">
    <location>
        <position position="320"/>
    </location>
    <ligand>
        <name>FAD</name>
        <dbReference type="ChEBI" id="CHEBI:57692"/>
    </ligand>
</feature>
<feature type="binding site" evidence="1">
    <location>
        <position position="411"/>
    </location>
    <ligand>
        <name>NADP(+)</name>
        <dbReference type="ChEBI" id="CHEBI:58349"/>
    </ligand>
</feature>
<protein>
    <recommendedName>
        <fullName evidence="3">Trimethylamine monooxygenase</fullName>
        <shortName evidence="3">TMA monooxygenase</shortName>
        <shortName evidence="3">Tmm</shortName>
        <ecNumber evidence="2">1.14.13.148</ecNumber>
    </recommendedName>
</protein>
<sequence>MTRVAIIGAGPSGLAQLRAFQSAGKKGAAIPELVCFEKQSDWGGLWNYTWRTGVDEYGEPVHGSMYRYLWSNGPKECLEFADYSFEEHFGRPIPSYPPRAVLHDYIMGRVEKSDVRKFVRFSTVVRWIDFDETTQLFTVTVKDLKKDELYSETFDYVVVASGHFSTPNVPHFPGIEVFPGRVLHAHDFRDANEFVGKNLLVVGSSYSAEDIASQCYKYGAKSITFSYRSKPLNFDWPECFTVKPLLTKLTGKTAHFKDGSEAVVDAVLLCTGYLHHFPFLADNLRLKTNNRLYPAGLYKGIFWQDNPKLIYLGMQDQYFTFNMFDAQAWYARDVILGRIKLPAAEERQADIDHWRGLEEKLETAFDGIDFQTEYMRDLIPATDYPMFDLDKVAALFKEWEEDKVKSIMGYRDNSYVSIMTGNKAPPHHTKWMEALDDSFDAFQNRPEAAAE</sequence>
<comment type="function">
    <text evidence="2">Catalyzes the oxidation of trimethylamine (TMA) to produce trimethylamine N-oxide (TMAO) (PubMed:22006322). In vitro, has a broad substrate specificity, oxidizing many nitrogen- and sulfur-containing compounds, including dimethylamine (DMA), dimethylsulfide (DMS), dimethylsulfoxide (DMSO), cysteamine, methimazole and dimethylaniline (PubMed:22006322).</text>
</comment>
<comment type="catalytic activity">
    <reaction evidence="2">
        <text>trimethylamine + NADPH + O2 = trimethylamine N-oxide + NADP(+) + H2O</text>
        <dbReference type="Rhea" id="RHEA:31979"/>
        <dbReference type="ChEBI" id="CHEBI:15377"/>
        <dbReference type="ChEBI" id="CHEBI:15379"/>
        <dbReference type="ChEBI" id="CHEBI:15724"/>
        <dbReference type="ChEBI" id="CHEBI:57783"/>
        <dbReference type="ChEBI" id="CHEBI:58349"/>
        <dbReference type="ChEBI" id="CHEBI:58389"/>
        <dbReference type="EC" id="1.14.13.148"/>
    </reaction>
    <physiologicalReaction direction="left-to-right" evidence="2">
        <dbReference type="Rhea" id="RHEA:31980"/>
    </physiologicalReaction>
</comment>
<comment type="cofactor">
    <cofactor evidence="1">
        <name>FAD</name>
        <dbReference type="ChEBI" id="CHEBI:57692"/>
    </cofactor>
</comment>
<comment type="biophysicochemical properties">
    <kinetics>
        <KM evidence="2">9.4 uM for TMA</KM>
        <KM evidence="2">89.7 uM for DMA</KM>
        <KM evidence="2">10.3 uM for DMS</KM>
        <KM evidence="2">3575 uM for DMSO</KM>
        <KM evidence="2">3139 uM for cysteamine</KM>
        <KM evidence="2">28.2 uM for methimazole</KM>
        <KM evidence="2">35.7 uM for dimethylaniline</KM>
        <Vmax evidence="2">29.4 nmol/min/mg enzyme with TMA as substrate</Vmax>
        <Vmax evidence="2">6.9 nmol/min/mg enzyme with DMA as substrate</Vmax>
        <Vmax evidence="2">34.6 nmol/min/mg enzyme with DMS as substrate</Vmax>
        <Vmax evidence="2">4.8 nmol/min/mg enzyme with DMSO as substrate</Vmax>
        <Vmax evidence="2">76.2 nmol/min/mg enzyme with cysteamine as substrate</Vmax>
        <Vmax evidence="2">14.4 nmol/min/mg enzyme with methimazole as substrate</Vmax>
        <Vmax evidence="2">29.2 nmol/min/mg enzyme with dimethylaniline as substrate</Vmax>
    </kinetics>
</comment>
<comment type="induction">
    <text evidence="2">Expression is induced by TMA.</text>
</comment>
<comment type="disruption phenotype">
    <text evidence="2">Mutant cannot grow on TMA as a sole source of carbon and energy.</text>
</comment>
<comment type="similarity">
    <text evidence="4">Belongs to the FMO family.</text>
</comment>
<gene>
    <name evidence="3" type="primary">tmm</name>
    <name evidence="5" type="ordered locus">Msil_3604</name>
</gene>
<evidence type="ECO:0000250" key="1">
    <source>
        <dbReference type="UniProtKB" id="A3SLM3"/>
    </source>
</evidence>
<evidence type="ECO:0000269" key="2">
    <source>
    </source>
</evidence>
<evidence type="ECO:0000303" key="3">
    <source>
    </source>
</evidence>
<evidence type="ECO:0000305" key="4"/>
<evidence type="ECO:0000312" key="5">
    <source>
        <dbReference type="EMBL" id="ACK52489.1"/>
    </source>
</evidence>
<accession>B8EIZ7</accession>
<reference key="1">
    <citation type="journal article" date="2010" name="J. Bacteriol.">
        <title>Complete genome sequence of the aerobic facultative methanotroph Methylocella silvestris BL2.</title>
        <authorList>
            <person name="Chen Y."/>
            <person name="Crombie A."/>
            <person name="Rahman M.T."/>
            <person name="Dedysh S.N."/>
            <person name="Liesack W."/>
            <person name="Stott M.B."/>
            <person name="Alam M."/>
            <person name="Theisen A.R."/>
            <person name="Murrell J.C."/>
            <person name="Dunfield P.F."/>
        </authorList>
    </citation>
    <scope>NUCLEOTIDE SEQUENCE [LARGE SCALE GENOMIC DNA]</scope>
    <source>
        <strain>DSM 15510 / CIP 108128 / LMG 27833 / NCIMB 13906 / BL2</strain>
    </source>
</reference>
<reference key="2">
    <citation type="journal article" date="2011" name="Proc. Natl. Acad. Sci. U.S.A.">
        <title>Bacterial flavin-containing monooxygenase is trimethylamine monooxygenase.</title>
        <authorList>
            <person name="Chen Y."/>
            <person name="Patel N.A."/>
            <person name="Crombie A."/>
            <person name="Scrivens J.H."/>
            <person name="Murrell J.C."/>
        </authorList>
    </citation>
    <scope>FUNCTION</scope>
    <scope>CATALYTIC ACTIVITY</scope>
    <scope>BIOPHYSICOCHEMICAL PROPERTIES</scope>
    <scope>INDUCTION</scope>
    <scope>DISRUPTION PHENOTYPE</scope>
    <source>
        <strain>DSM 15510 / CIP 108128 / LMG 27833 / NCIMB 13906 / BL2</strain>
    </source>
</reference>
<dbReference type="EC" id="1.14.13.148" evidence="2"/>
<dbReference type="EMBL" id="CP001280">
    <property type="protein sequence ID" value="ACK52489.1"/>
    <property type="molecule type" value="Genomic_DNA"/>
</dbReference>
<dbReference type="RefSeq" id="WP_012592557.1">
    <property type="nucleotide sequence ID" value="NC_011666.1"/>
</dbReference>
<dbReference type="SMR" id="B8EIZ7"/>
<dbReference type="STRING" id="395965.Msil_3604"/>
<dbReference type="KEGG" id="msl:Msil_3604"/>
<dbReference type="eggNOG" id="COG2072">
    <property type="taxonomic scope" value="Bacteria"/>
</dbReference>
<dbReference type="HOGENOM" id="CLU_006909_3_0_5"/>
<dbReference type="OrthoDB" id="9790219at2"/>
<dbReference type="Proteomes" id="UP000002257">
    <property type="component" value="Chromosome"/>
</dbReference>
<dbReference type="GO" id="GO:0050660">
    <property type="term" value="F:flavin adenine dinucleotide binding"/>
    <property type="evidence" value="ECO:0007669"/>
    <property type="project" value="InterPro"/>
</dbReference>
<dbReference type="GO" id="GO:0004499">
    <property type="term" value="F:N,N-dimethylaniline monooxygenase activity"/>
    <property type="evidence" value="ECO:0007669"/>
    <property type="project" value="InterPro"/>
</dbReference>
<dbReference type="GO" id="GO:0050661">
    <property type="term" value="F:NADP binding"/>
    <property type="evidence" value="ECO:0007669"/>
    <property type="project" value="InterPro"/>
</dbReference>
<dbReference type="GO" id="GO:0034899">
    <property type="term" value="F:trimethylamine monooxygenase activity"/>
    <property type="evidence" value="ECO:0007669"/>
    <property type="project" value="RHEA"/>
</dbReference>
<dbReference type="FunFam" id="3.50.50.60:FF:000138">
    <property type="entry name" value="Flavin-containing monooxygenase"/>
    <property type="match status" value="1"/>
</dbReference>
<dbReference type="Gene3D" id="3.50.50.60">
    <property type="entry name" value="FAD/NAD(P)-binding domain"/>
    <property type="match status" value="2"/>
</dbReference>
<dbReference type="InterPro" id="IPR036188">
    <property type="entry name" value="FAD/NAD-bd_sf"/>
</dbReference>
<dbReference type="InterPro" id="IPR000960">
    <property type="entry name" value="Flavin_mOase"/>
</dbReference>
<dbReference type="InterPro" id="IPR020946">
    <property type="entry name" value="Flavin_mOase-like"/>
</dbReference>
<dbReference type="InterPro" id="IPR050346">
    <property type="entry name" value="FMO-like"/>
</dbReference>
<dbReference type="PANTHER" id="PTHR23023">
    <property type="entry name" value="DIMETHYLANILINE MONOOXYGENASE"/>
    <property type="match status" value="1"/>
</dbReference>
<dbReference type="Pfam" id="PF00743">
    <property type="entry name" value="FMO-like"/>
    <property type="match status" value="2"/>
</dbReference>
<dbReference type="PIRSF" id="PIRSF000332">
    <property type="entry name" value="FMO"/>
    <property type="match status" value="1"/>
</dbReference>
<dbReference type="PRINTS" id="PR00411">
    <property type="entry name" value="PNDRDTASEI"/>
</dbReference>
<dbReference type="SUPFAM" id="SSF51905">
    <property type="entry name" value="FAD/NAD(P)-binding domain"/>
    <property type="match status" value="2"/>
</dbReference>
<keyword id="KW-0274">FAD</keyword>
<keyword id="KW-0285">Flavoprotein</keyword>
<keyword id="KW-0503">Monooxygenase</keyword>
<keyword id="KW-0521">NADP</keyword>
<keyword id="KW-0560">Oxidoreductase</keyword>
<keyword id="KW-1185">Reference proteome</keyword>
<name>TMM_METSB</name>
<organism>
    <name type="scientific">Methylocella silvestris (strain DSM 15510 / CIP 108128 / LMG 27833 / NCIMB 13906 / BL2)</name>
    <dbReference type="NCBI Taxonomy" id="395965"/>
    <lineage>
        <taxon>Bacteria</taxon>
        <taxon>Pseudomonadati</taxon>
        <taxon>Pseudomonadota</taxon>
        <taxon>Alphaproteobacteria</taxon>
        <taxon>Hyphomicrobiales</taxon>
        <taxon>Beijerinckiaceae</taxon>
        <taxon>Methylocella</taxon>
    </lineage>
</organism>